<dbReference type="EC" id="2.7.7.101" evidence="1"/>
<dbReference type="EMBL" id="AE008384">
    <property type="protein sequence ID" value="AAM30991.1"/>
    <property type="status" value="ALT_INIT"/>
    <property type="molecule type" value="Genomic_DNA"/>
</dbReference>
<dbReference type="RefSeq" id="WP_048039564.1">
    <property type="nucleotide sequence ID" value="NC_003901.1"/>
</dbReference>
<dbReference type="GeneID" id="82160335"/>
<dbReference type="KEGG" id="mma:MM_1295"/>
<dbReference type="PATRIC" id="fig|192952.21.peg.1505"/>
<dbReference type="eggNOG" id="arCOG04281">
    <property type="taxonomic scope" value="Archaea"/>
</dbReference>
<dbReference type="HOGENOM" id="CLU_034626_0_0_2"/>
<dbReference type="Proteomes" id="UP000000595">
    <property type="component" value="Chromosome"/>
</dbReference>
<dbReference type="GO" id="GO:0005737">
    <property type="term" value="C:cytoplasm"/>
    <property type="evidence" value="ECO:0007669"/>
    <property type="project" value="TreeGrafter"/>
</dbReference>
<dbReference type="GO" id="GO:0000428">
    <property type="term" value="C:DNA-directed RNA polymerase complex"/>
    <property type="evidence" value="ECO:0007669"/>
    <property type="project" value="UniProtKB-KW"/>
</dbReference>
<dbReference type="GO" id="GO:0000178">
    <property type="term" value="C:exosome (RNase complex)"/>
    <property type="evidence" value="ECO:0007669"/>
    <property type="project" value="UniProtKB-KW"/>
</dbReference>
<dbReference type="GO" id="GO:1990077">
    <property type="term" value="C:primosome complex"/>
    <property type="evidence" value="ECO:0007669"/>
    <property type="project" value="UniProtKB-KW"/>
</dbReference>
<dbReference type="GO" id="GO:0003899">
    <property type="term" value="F:DNA-directed RNA polymerase activity"/>
    <property type="evidence" value="ECO:0007669"/>
    <property type="project" value="InterPro"/>
</dbReference>
<dbReference type="GO" id="GO:0046872">
    <property type="term" value="F:metal ion binding"/>
    <property type="evidence" value="ECO:0007669"/>
    <property type="project" value="UniProtKB-KW"/>
</dbReference>
<dbReference type="GO" id="GO:0008143">
    <property type="term" value="F:poly(A) binding"/>
    <property type="evidence" value="ECO:0007669"/>
    <property type="project" value="InterPro"/>
</dbReference>
<dbReference type="GO" id="GO:0006269">
    <property type="term" value="P:DNA replication, synthesis of primer"/>
    <property type="evidence" value="ECO:0007669"/>
    <property type="project" value="UniProtKB-UniRule"/>
</dbReference>
<dbReference type="CDD" id="cd01029">
    <property type="entry name" value="TOPRIM_primases"/>
    <property type="match status" value="1"/>
</dbReference>
<dbReference type="FunFam" id="3.40.1360.10:FF:000010">
    <property type="entry name" value="DNA primase DnaG"/>
    <property type="match status" value="1"/>
</dbReference>
<dbReference type="Gene3D" id="3.40.1360.10">
    <property type="match status" value="1"/>
</dbReference>
<dbReference type="HAMAP" id="MF_00007">
    <property type="entry name" value="DNA_primase_DnaG_arc"/>
    <property type="match status" value="1"/>
</dbReference>
<dbReference type="InterPro" id="IPR050219">
    <property type="entry name" value="DnaG_primase"/>
</dbReference>
<dbReference type="InterPro" id="IPR020607">
    <property type="entry name" value="Primase_DnaG_arc"/>
</dbReference>
<dbReference type="InterPro" id="IPR034154">
    <property type="entry name" value="TOPRIM_DnaG/twinkle"/>
</dbReference>
<dbReference type="InterPro" id="IPR006171">
    <property type="entry name" value="TOPRIM_dom"/>
</dbReference>
<dbReference type="NCBIfam" id="NF003108">
    <property type="entry name" value="PRK04031.1-1"/>
    <property type="match status" value="1"/>
</dbReference>
<dbReference type="PANTHER" id="PTHR30313">
    <property type="entry name" value="DNA PRIMASE"/>
    <property type="match status" value="1"/>
</dbReference>
<dbReference type="PANTHER" id="PTHR30313:SF2">
    <property type="entry name" value="DNA PRIMASE"/>
    <property type="match status" value="1"/>
</dbReference>
<dbReference type="Pfam" id="PF13662">
    <property type="entry name" value="Toprim_4"/>
    <property type="match status" value="1"/>
</dbReference>
<dbReference type="SMART" id="SM00493">
    <property type="entry name" value="TOPRIM"/>
    <property type="match status" value="1"/>
</dbReference>
<dbReference type="SUPFAM" id="SSF56731">
    <property type="entry name" value="DNA primase core"/>
    <property type="match status" value="1"/>
</dbReference>
<dbReference type="PROSITE" id="PS50880">
    <property type="entry name" value="TOPRIM"/>
    <property type="match status" value="1"/>
</dbReference>
<name>DNAG_METMA</name>
<accession>Q8PXC6</accession>
<keyword id="KW-0235">DNA replication</keyword>
<keyword id="KW-0240">DNA-directed RNA polymerase</keyword>
<keyword id="KW-0271">Exosome</keyword>
<keyword id="KW-0460">Magnesium</keyword>
<keyword id="KW-0479">Metal-binding</keyword>
<keyword id="KW-0548">Nucleotidyltransferase</keyword>
<keyword id="KW-0639">Primosome</keyword>
<keyword id="KW-0804">Transcription</keyword>
<keyword id="KW-0808">Transferase</keyword>
<protein>
    <recommendedName>
        <fullName evidence="1">DNA primase DnaG</fullName>
        <ecNumber evidence="1">2.7.7.101</ecNumber>
    </recommendedName>
</protein>
<evidence type="ECO:0000255" key="1">
    <source>
        <dbReference type="HAMAP-Rule" id="MF_00007"/>
    </source>
</evidence>
<evidence type="ECO:0000305" key="2"/>
<proteinExistence type="inferred from homology"/>
<reference key="1">
    <citation type="journal article" date="2002" name="J. Mol. Microbiol. Biotechnol.">
        <title>The genome of Methanosarcina mazei: evidence for lateral gene transfer between Bacteria and Archaea.</title>
        <authorList>
            <person name="Deppenmeier U."/>
            <person name="Johann A."/>
            <person name="Hartsch T."/>
            <person name="Merkl R."/>
            <person name="Schmitz R.A."/>
            <person name="Martinez-Arias R."/>
            <person name="Henne A."/>
            <person name="Wiezer A."/>
            <person name="Baeumer S."/>
            <person name="Jacobi C."/>
            <person name="Brueggemann H."/>
            <person name="Lienard T."/>
            <person name="Christmann A."/>
            <person name="Boemecke M."/>
            <person name="Steckel S."/>
            <person name="Bhattacharyya A."/>
            <person name="Lykidis A."/>
            <person name="Overbeek R."/>
            <person name="Klenk H.-P."/>
            <person name="Gunsalus R.P."/>
            <person name="Fritz H.-J."/>
            <person name="Gottschalk G."/>
        </authorList>
    </citation>
    <scope>NUCLEOTIDE SEQUENCE [LARGE SCALE GENOMIC DNA]</scope>
    <source>
        <strain>ATCC BAA-159 / DSM 3647 / Goe1 / Go1 / JCM 11833 / OCM 88</strain>
    </source>
</reference>
<gene>
    <name evidence="1" type="primary">dnaG</name>
    <name type="ordered locus">MM_1295</name>
</gene>
<comment type="function">
    <text evidence="1">RNA polymerase that catalyzes the synthesis of short RNA molecules used as primers for DNA polymerase during DNA replication. Also part of the exosome, which is a complex involved in RNA degradation. Acts as a poly(A)-binding protein that enhances the interaction between heteromeric, adenine-rich transcripts and the exosome.</text>
</comment>
<comment type="catalytic activity">
    <reaction evidence="1">
        <text>ssDNA + n NTP = ssDNA/pppN(pN)n-1 hybrid + (n-1) diphosphate.</text>
        <dbReference type="EC" id="2.7.7.101"/>
    </reaction>
</comment>
<comment type="cofactor">
    <cofactor evidence="1">
        <name>Mg(2+)</name>
        <dbReference type="ChEBI" id="CHEBI:18420"/>
    </cofactor>
    <text evidence="1">Binds two Mg(2+) per subunit.</text>
</comment>
<comment type="subunit">
    <text evidence="1">Forms a ternary complex with MCM helicase and DNA. Component of the archaeal exosome complex.</text>
</comment>
<comment type="similarity">
    <text evidence="1">Belongs to the archaeal DnaG primase family.</text>
</comment>
<comment type="sequence caution" evidence="2">
    <conflict type="erroneous initiation">
        <sequence resource="EMBL-CDS" id="AAM30991"/>
    </conflict>
</comment>
<feature type="chain" id="PRO_0000240460" description="DNA primase DnaG">
    <location>
        <begin position="1"/>
        <end position="522"/>
    </location>
</feature>
<feature type="domain" description="Toprim" evidence="1">
    <location>
        <begin position="171"/>
        <end position="257"/>
    </location>
</feature>
<feature type="binding site" evidence="1">
    <location>
        <position position="177"/>
    </location>
    <ligand>
        <name>Mg(2+)</name>
        <dbReference type="ChEBI" id="CHEBI:18420"/>
        <label>1</label>
        <note>catalytic</note>
    </ligand>
</feature>
<feature type="binding site" evidence="1">
    <location>
        <position position="219"/>
    </location>
    <ligand>
        <name>Mg(2+)</name>
        <dbReference type="ChEBI" id="CHEBI:18420"/>
        <label>1</label>
        <note>catalytic</note>
    </ligand>
</feature>
<feature type="binding site" evidence="1">
    <location>
        <position position="219"/>
    </location>
    <ligand>
        <name>Mg(2+)</name>
        <dbReference type="ChEBI" id="CHEBI:18420"/>
        <label>2</label>
    </ligand>
</feature>
<feature type="binding site" evidence="1">
    <location>
        <position position="221"/>
    </location>
    <ligand>
        <name>Mg(2+)</name>
        <dbReference type="ChEBI" id="CHEBI:18420"/>
        <label>2</label>
    </ligand>
</feature>
<organism>
    <name type="scientific">Methanosarcina mazei (strain ATCC BAA-159 / DSM 3647 / Goe1 / Go1 / JCM 11833 / OCM 88)</name>
    <name type="common">Methanosarcina frisia</name>
    <dbReference type="NCBI Taxonomy" id="192952"/>
    <lineage>
        <taxon>Archaea</taxon>
        <taxon>Methanobacteriati</taxon>
        <taxon>Methanobacteriota</taxon>
        <taxon>Stenosarchaea group</taxon>
        <taxon>Methanomicrobia</taxon>
        <taxon>Methanosarcinales</taxon>
        <taxon>Methanosarcinaceae</taxon>
        <taxon>Methanosarcina</taxon>
    </lineage>
</organism>
<sequence>MQNTDTTKYIIHSKINADGVIERPDIVGAIFGQTEGLLGADLDLRDLQKTGRIGRIEVMVTAKGGKTKGNIFVPSSLDKVETSILAASLETIDRVGPCSAKIEVFQVEDVRAVKRKKIIERAKLIFTKMFDETVPESQELADEVRQSVRVDELTYYGKSRIPCGPNVLNSDAIIILEGRADILNLLRYGIKNTICVGGTNIPPEVAELTKKKTVTAFTDGDRGGELIIRELLQVADIDYVARAPDGKCVEDLVQKEIIRALRRKVPVEQIIEKYGIQERENEDSACRLERVSKRKIRAPEIVPRIAEKKLHKRVKVHRVSPKADIHEEEFPEEMEETGPERAPEKIFEKVTERIPERPAEKTSAAAERVEARTSVAKPAVMARAVPATRVTRGKAAAEKGPAVKVPGGEAVRVSPAPARQAPAPVSPEAIRFRPHVDALKGTLTARILDSDDKVIEEIAVRDLASRLKNYRDNVKSVVFDGVITQRLVDIASSNEIKNLIGVKIGNIAKVPADMEVLTSSML</sequence>